<dbReference type="EMBL" id="CP001048">
    <property type="protein sequence ID" value="ACC90833.1"/>
    <property type="molecule type" value="Genomic_DNA"/>
</dbReference>
<dbReference type="RefSeq" id="WP_002221644.1">
    <property type="nucleotide sequence ID" value="NZ_CP009780.1"/>
</dbReference>
<dbReference type="SMR" id="B2K5M4"/>
<dbReference type="GeneID" id="97454237"/>
<dbReference type="KEGG" id="ypb:YPTS_3884"/>
<dbReference type="PATRIC" id="fig|502801.10.peg.3349"/>
<dbReference type="GO" id="GO:0022627">
    <property type="term" value="C:cytosolic small ribosomal subunit"/>
    <property type="evidence" value="ECO:0007669"/>
    <property type="project" value="TreeGrafter"/>
</dbReference>
<dbReference type="GO" id="GO:0003729">
    <property type="term" value="F:mRNA binding"/>
    <property type="evidence" value="ECO:0007669"/>
    <property type="project" value="UniProtKB-UniRule"/>
</dbReference>
<dbReference type="GO" id="GO:0019843">
    <property type="term" value="F:rRNA binding"/>
    <property type="evidence" value="ECO:0007669"/>
    <property type="project" value="UniProtKB-UniRule"/>
</dbReference>
<dbReference type="GO" id="GO:0003735">
    <property type="term" value="F:structural constituent of ribosome"/>
    <property type="evidence" value="ECO:0007669"/>
    <property type="project" value="InterPro"/>
</dbReference>
<dbReference type="GO" id="GO:0006412">
    <property type="term" value="P:translation"/>
    <property type="evidence" value="ECO:0007669"/>
    <property type="project" value="UniProtKB-UniRule"/>
</dbReference>
<dbReference type="CDD" id="cd02412">
    <property type="entry name" value="KH-II_30S_S3"/>
    <property type="match status" value="1"/>
</dbReference>
<dbReference type="FunFam" id="3.30.1140.32:FF:000001">
    <property type="entry name" value="30S ribosomal protein S3"/>
    <property type="match status" value="1"/>
</dbReference>
<dbReference type="FunFam" id="3.30.300.20:FF:000001">
    <property type="entry name" value="30S ribosomal protein S3"/>
    <property type="match status" value="1"/>
</dbReference>
<dbReference type="Gene3D" id="3.30.300.20">
    <property type="match status" value="1"/>
</dbReference>
<dbReference type="Gene3D" id="3.30.1140.32">
    <property type="entry name" value="Ribosomal protein S3, C-terminal domain"/>
    <property type="match status" value="1"/>
</dbReference>
<dbReference type="HAMAP" id="MF_01309_B">
    <property type="entry name" value="Ribosomal_uS3_B"/>
    <property type="match status" value="1"/>
</dbReference>
<dbReference type="InterPro" id="IPR004087">
    <property type="entry name" value="KH_dom"/>
</dbReference>
<dbReference type="InterPro" id="IPR015946">
    <property type="entry name" value="KH_dom-like_a/b"/>
</dbReference>
<dbReference type="InterPro" id="IPR004044">
    <property type="entry name" value="KH_dom_type_2"/>
</dbReference>
<dbReference type="InterPro" id="IPR009019">
    <property type="entry name" value="KH_sf_prok-type"/>
</dbReference>
<dbReference type="InterPro" id="IPR036419">
    <property type="entry name" value="Ribosomal_S3_C_sf"/>
</dbReference>
<dbReference type="InterPro" id="IPR005704">
    <property type="entry name" value="Ribosomal_uS3_bac-typ"/>
</dbReference>
<dbReference type="InterPro" id="IPR001351">
    <property type="entry name" value="Ribosomal_uS3_C"/>
</dbReference>
<dbReference type="InterPro" id="IPR018280">
    <property type="entry name" value="Ribosomal_uS3_CS"/>
</dbReference>
<dbReference type="NCBIfam" id="TIGR01009">
    <property type="entry name" value="rpsC_bact"/>
    <property type="match status" value="1"/>
</dbReference>
<dbReference type="PANTHER" id="PTHR11760">
    <property type="entry name" value="30S/40S RIBOSOMAL PROTEIN S3"/>
    <property type="match status" value="1"/>
</dbReference>
<dbReference type="PANTHER" id="PTHR11760:SF19">
    <property type="entry name" value="SMALL RIBOSOMAL SUBUNIT PROTEIN US3C"/>
    <property type="match status" value="1"/>
</dbReference>
<dbReference type="Pfam" id="PF07650">
    <property type="entry name" value="KH_2"/>
    <property type="match status" value="1"/>
</dbReference>
<dbReference type="Pfam" id="PF00189">
    <property type="entry name" value="Ribosomal_S3_C"/>
    <property type="match status" value="1"/>
</dbReference>
<dbReference type="SMART" id="SM00322">
    <property type="entry name" value="KH"/>
    <property type="match status" value="1"/>
</dbReference>
<dbReference type="SUPFAM" id="SSF54814">
    <property type="entry name" value="Prokaryotic type KH domain (KH-domain type II)"/>
    <property type="match status" value="1"/>
</dbReference>
<dbReference type="SUPFAM" id="SSF54821">
    <property type="entry name" value="Ribosomal protein S3 C-terminal domain"/>
    <property type="match status" value="1"/>
</dbReference>
<dbReference type="PROSITE" id="PS50823">
    <property type="entry name" value="KH_TYPE_2"/>
    <property type="match status" value="1"/>
</dbReference>
<dbReference type="PROSITE" id="PS00548">
    <property type="entry name" value="RIBOSOMAL_S3"/>
    <property type="match status" value="1"/>
</dbReference>
<proteinExistence type="inferred from homology"/>
<organism>
    <name type="scientific">Yersinia pseudotuberculosis serotype IB (strain PB1/+)</name>
    <dbReference type="NCBI Taxonomy" id="502801"/>
    <lineage>
        <taxon>Bacteria</taxon>
        <taxon>Pseudomonadati</taxon>
        <taxon>Pseudomonadota</taxon>
        <taxon>Gammaproteobacteria</taxon>
        <taxon>Enterobacterales</taxon>
        <taxon>Yersiniaceae</taxon>
        <taxon>Yersinia</taxon>
    </lineage>
</organism>
<comment type="function">
    <text evidence="1">Binds the lower part of the 30S subunit head. Binds mRNA in the 70S ribosome, positioning it for translation.</text>
</comment>
<comment type="subunit">
    <text evidence="1">Part of the 30S ribosomal subunit. Forms a tight complex with proteins S10 and S14.</text>
</comment>
<comment type="similarity">
    <text evidence="1">Belongs to the universal ribosomal protein uS3 family.</text>
</comment>
<evidence type="ECO:0000255" key="1">
    <source>
        <dbReference type="HAMAP-Rule" id="MF_01309"/>
    </source>
</evidence>
<evidence type="ECO:0000305" key="2"/>
<feature type="chain" id="PRO_1000141037" description="Small ribosomal subunit protein uS3">
    <location>
        <begin position="1"/>
        <end position="232"/>
    </location>
</feature>
<feature type="domain" description="KH type-2" evidence="1">
    <location>
        <begin position="39"/>
        <end position="107"/>
    </location>
</feature>
<protein>
    <recommendedName>
        <fullName evidence="1">Small ribosomal subunit protein uS3</fullName>
    </recommendedName>
    <alternativeName>
        <fullName evidence="2">30S ribosomal protein S3</fullName>
    </alternativeName>
</protein>
<name>RS3_YERPB</name>
<keyword id="KW-0687">Ribonucleoprotein</keyword>
<keyword id="KW-0689">Ribosomal protein</keyword>
<keyword id="KW-0694">RNA-binding</keyword>
<keyword id="KW-0699">rRNA-binding</keyword>
<accession>B2K5M4</accession>
<sequence length="232" mass="25829">MGQKVHPNGIRLGIVKAWNSTWYANTKEFADNLDSDFKVRQFLTKELAKASVSRIVIERPAKSIRVTIHTARPGIVIGKKGEDVEKLRKVVADIAGVPAQINIAEVRKPELDAKLVADSITSQLERRVMFRRAMKRAVQNAMRLGAKGIKVEVSGRLGGAEIARTEWYREGRVPLHTLRADIDYNTSEAHTTYGVIGVKVWIFKGEILGGMAAVEQPEPAAQPKKQQRKGRK</sequence>
<reference key="1">
    <citation type="submission" date="2008-04" db="EMBL/GenBank/DDBJ databases">
        <title>Complete sequence of Yersinia pseudotuberculosis PB1/+.</title>
        <authorList>
            <person name="Copeland A."/>
            <person name="Lucas S."/>
            <person name="Lapidus A."/>
            <person name="Glavina del Rio T."/>
            <person name="Dalin E."/>
            <person name="Tice H."/>
            <person name="Bruce D."/>
            <person name="Goodwin L."/>
            <person name="Pitluck S."/>
            <person name="Munk A.C."/>
            <person name="Brettin T."/>
            <person name="Detter J.C."/>
            <person name="Han C."/>
            <person name="Tapia R."/>
            <person name="Schmutz J."/>
            <person name="Larimer F."/>
            <person name="Land M."/>
            <person name="Hauser L."/>
            <person name="Challacombe J.F."/>
            <person name="Green L."/>
            <person name="Lindler L.E."/>
            <person name="Nikolich M.P."/>
            <person name="Richardson P."/>
        </authorList>
    </citation>
    <scope>NUCLEOTIDE SEQUENCE [LARGE SCALE GENOMIC DNA]</scope>
    <source>
        <strain>PB1/+</strain>
    </source>
</reference>
<gene>
    <name evidence="1" type="primary">rpsC</name>
    <name type="ordered locus">YPTS_3884</name>
</gene>